<proteinExistence type="evidence at protein level"/>
<accession>P04893</accession>
<accession>Q7PCC9</accession>
<dbReference type="EMBL" id="M10075">
    <property type="protein sequence ID" value="AAA32272.1"/>
    <property type="molecule type" value="Genomic_DNA"/>
</dbReference>
<dbReference type="EMBL" id="M59749">
    <property type="protein sequence ID" value="AAA72958.1"/>
    <property type="molecule type" value="Genomic_DNA"/>
</dbReference>
<dbReference type="EMBL" id="AF217253">
    <property type="protein sequence ID" value="AAF75043.1"/>
    <property type="molecule type" value="Genomic_DNA"/>
</dbReference>
<dbReference type="EMBL" id="BK000583">
    <property type="protein sequence ID" value="DAA01046.1"/>
    <property type="molecule type" value="Genomic_DNA"/>
</dbReference>
<dbReference type="PIR" id="A04292">
    <property type="entry name" value="Z3BP22"/>
</dbReference>
<dbReference type="RefSeq" id="YP_063714.1">
    <property type="nucleotide sequence ID" value="NC_002371.2"/>
</dbReference>
<dbReference type="PDB" id="3P9A">
    <property type="method" value="X-ray"/>
    <property type="resolution" value="1.76 A"/>
    <property type="chains" value="A/B/C/D/E/F/G/H/I=1-162"/>
</dbReference>
<dbReference type="PDBsum" id="3P9A"/>
<dbReference type="SMR" id="P04893"/>
<dbReference type="DIP" id="DIP-59855N"/>
<dbReference type="IntAct" id="P04893">
    <property type="interactions" value="1"/>
</dbReference>
<dbReference type="GeneID" id="2944227"/>
<dbReference type="KEGG" id="vg:2944227"/>
<dbReference type="OrthoDB" id="11288at10239"/>
<dbReference type="EvolutionaryTrace" id="P04893"/>
<dbReference type="Proteomes" id="UP000001795">
    <property type="component" value="Segment"/>
</dbReference>
<dbReference type="Proteomes" id="UP000007960">
    <property type="component" value="Segment"/>
</dbReference>
<dbReference type="GO" id="GO:0043493">
    <property type="term" value="C:viral terminase complex"/>
    <property type="evidence" value="ECO:0000314"/>
    <property type="project" value="UniProtKB"/>
</dbReference>
<dbReference type="GO" id="GO:0097710">
    <property type="term" value="C:viral terminase, small subunit"/>
    <property type="evidence" value="ECO:0000314"/>
    <property type="project" value="UniProtKB"/>
</dbReference>
<dbReference type="GO" id="GO:0003677">
    <property type="term" value="F:DNA binding"/>
    <property type="evidence" value="ECO:0007669"/>
    <property type="project" value="UniProtKB-KW"/>
</dbReference>
<dbReference type="GO" id="GO:0042802">
    <property type="term" value="F:identical protein binding"/>
    <property type="evidence" value="ECO:0000353"/>
    <property type="project" value="IntAct"/>
</dbReference>
<dbReference type="Gene3D" id="1.10.132.80">
    <property type="match status" value="1"/>
</dbReference>
<dbReference type="InterPro" id="IPR032066">
    <property type="entry name" value="GP3_package"/>
</dbReference>
<dbReference type="Pfam" id="PF16677">
    <property type="entry name" value="GP3_package"/>
    <property type="match status" value="1"/>
</dbReference>
<organismHost>
    <name type="scientific">Salmonella typhimurium</name>
    <dbReference type="NCBI Taxonomy" id="90371"/>
</organismHost>
<evidence type="ECO:0000256" key="1">
    <source>
        <dbReference type="SAM" id="MobiDB-lite"/>
    </source>
</evidence>
<evidence type="ECO:0000269" key="2">
    <source>
    </source>
</evidence>
<evidence type="ECO:0000269" key="3">
    <source>
    </source>
</evidence>
<evidence type="ECO:0000269" key="4">
    <source>
    </source>
</evidence>
<evidence type="ECO:0000269" key="5">
    <source>
    </source>
</evidence>
<evidence type="ECO:0000269" key="6">
    <source>
    </source>
</evidence>
<evidence type="ECO:0000303" key="7">
    <source>
    </source>
</evidence>
<evidence type="ECO:0000305" key="8"/>
<evidence type="ECO:0000305" key="9">
    <source>
    </source>
</evidence>
<evidence type="ECO:0000305" key="10">
    <source>
    </source>
</evidence>
<evidence type="ECO:0007744" key="11">
    <source>
        <dbReference type="PDB" id="3P9A"/>
    </source>
</evidence>
<evidence type="ECO:0007829" key="12">
    <source>
        <dbReference type="PDB" id="3P9A"/>
    </source>
</evidence>
<gene>
    <name type="primary">3</name>
</gene>
<sequence length="162" mass="18650">MAAPKGNRFWEARSSHGRNPKFESPEALWAACCEYFEWVEANPLWEMKAFSYQGEVIQEPIAKMRAMTITGLTLFIDVTLETWRTYRLREDLSEVVTRAEQVIYDQKFSGAAADLLNANIIARDLGLKEQSQVEDVTPDKGDRDKRRSRIKELFNRGTGRDS</sequence>
<protein>
    <recommendedName>
        <fullName evidence="7">Terminase, small subunit</fullName>
    </recommendedName>
    <alternativeName>
        <fullName evidence="8">DNA-packaging protein gp3</fullName>
    </alternativeName>
</protein>
<reference key="1">
    <citation type="journal article" date="1985" name="J. Virol.">
        <title>DNA packaging initiation of Salmonella bacteriophage P22: determination of cut sites within the DNA sequence coding for gene 3.</title>
        <authorList>
            <person name="Backhaus H."/>
        </authorList>
    </citation>
    <scope>NUCLEOTIDE SEQUENCE [GENOMIC DNA]</scope>
</reference>
<reference key="2">
    <citation type="journal article" date="1991" name="Virology">
        <title>Nucleotide sequence of the bacteriophage P22 genes required for DNA packaging.</title>
        <authorList>
            <person name="Eppler K."/>
            <person name="Wyckoff E."/>
            <person name="Goates J."/>
            <person name="Parr R."/>
            <person name="Casjens S."/>
        </authorList>
    </citation>
    <scope>NUCLEOTIDE SEQUENCE [GENOMIC DNA]</scope>
    <scope>PROTEIN SEQUENCE OF 2-7</scope>
</reference>
<reference key="3">
    <citation type="journal article" date="2000" name="J. Bacteriol.">
        <title>Sequence of the genome of Salmonella bacteriophage P22.</title>
        <authorList>
            <person name="Vander Byl C.S."/>
            <person name="Kropinski A.M.B."/>
        </authorList>
    </citation>
    <scope>NUCLEOTIDE SEQUENCE [LARGE SCALE GENOMIC DNA]</scope>
</reference>
<reference key="4">
    <citation type="journal article" date="2003" name="J. Bacteriol.">
        <title>Corrected sequence of the bacteriophage P22 genome.</title>
        <authorList>
            <person name="Pedulla M.L."/>
            <person name="Ford M.E."/>
            <person name="Karthikeyan T."/>
            <person name="Houtz J.M."/>
            <person name="Hendrix R.W."/>
            <person name="Hatfull G.F."/>
            <person name="Poteete A.R."/>
            <person name="Gilcrease E.B."/>
            <person name="Winn-Stapley D.A."/>
            <person name="Casjens S.R."/>
        </authorList>
    </citation>
    <scope>NUCLEOTIDE SEQUENCE [LARGE SCALE GENOMIC DNA]</scope>
</reference>
<reference key="5">
    <citation type="journal article" date="2007" name="J. Mol. Biol.">
        <title>Subunit conformations and assembly states of a DNA-translocating motor: the terminase of bacteriophage P22.</title>
        <authorList>
            <person name="Nemecek D."/>
            <person name="Gilcrease E.B."/>
            <person name="Kang S."/>
            <person name="Prevelige P.E. Jr."/>
            <person name="Casjens S."/>
            <person name="Thomas G.J. Jr."/>
        </authorList>
    </citation>
    <scope>INTERACTION WITH THE TERMINASE SMALL SUBUNIT</scope>
    <scope>SUBUNIT</scope>
    <scope>MUTAGENESIS OF ALA-112</scope>
</reference>
<reference key="6">
    <citation type="journal article" date="2008" name="J. Mol. Biol.">
        <title>Assembly architecture and DNA binding of the bacteriophage P22 terminase small subunit.</title>
        <authorList>
            <person name="Nemecek D."/>
            <person name="Lander G.C."/>
            <person name="Johnson J.E."/>
            <person name="Casjens S.R."/>
            <person name="Thomas G.J. Jr."/>
        </authorList>
    </citation>
    <scope>SUBUNIT</scope>
    <scope>DNA-BINDING</scope>
    <scope>FUNCTION</scope>
</reference>
<reference key="7">
    <citation type="journal article" date="2011" name="Acta Crystallogr. F">
        <title>Crystallization of the nonameric small terminase subunit of bacteriophage P22.</title>
        <authorList>
            <person name="Roy A."/>
            <person name="Bhardwaj A."/>
            <person name="Cingolani G."/>
        </authorList>
    </citation>
    <scope>SUBUNIT</scope>
</reference>
<reference key="8">
    <citation type="journal article" date="2015" name="J. Mol. Biol.">
        <title>Architecture of the Complex Formed by Large and Small Terminase Subunits from Bacteriophage P22.</title>
        <authorList>
            <person name="McNulty R."/>
            <person name="Lokareddy R.K."/>
            <person name="Roy A."/>
            <person name="Yang Y."/>
            <person name="Lander G."/>
            <person name="Heck A.J."/>
            <person name="Johnson J.E."/>
            <person name="Cingolani G."/>
        </authorList>
    </citation>
    <scope>INTERACTION WITH THE TERMINASE LARGE SUBUNIT</scope>
    <scope>SUBUNIT</scope>
</reference>
<reference key="9">
    <citation type="journal article" date="2021" name="Virology">
        <title>The coevolution of large and small terminases of bacteriophages is a result of purifying selection leading to phenotypic stabilization.</title>
        <authorList>
            <person name="Wangchuk J."/>
            <person name="Chatterjee A."/>
            <person name="Patil S."/>
            <person name="Madugula S.K."/>
            <person name="Kondabagil K."/>
        </authorList>
    </citation>
    <scope>DOMAIN</scope>
</reference>
<reference evidence="11" key="10">
    <citation type="journal article" date="2012" name="Structure">
        <title>Small terminase couples viral DNA binding to genome-packaging ATPase activity.</title>
        <authorList>
            <person name="Roy A."/>
            <person name="Bhardwaj A."/>
            <person name="Datta P."/>
            <person name="Lander G.C."/>
            <person name="Cingolani G."/>
        </authorList>
    </citation>
    <scope>X-RAY CRYSTALLOGRAPHY (1.75 ANGSTROMS)</scope>
    <scope>FUNCTION</scope>
</reference>
<comment type="function">
    <text evidence="9">The terminase small subunit binds to the packaging initiation site and regulates the ATPase activity of the terminase large subunit. The terminase lies at a unique vertex of the procapsid and is composed of two subunits, a small terminase subunit involved in viral DNA recognition (packaging 'pac' sequence), and a large terminase subunit possessing endonucleolytic and ATPase activities. Both terminase subunits heterooligomerize and are docked on the portal protein to form the packaging machine. The terminase large subunit exhibits endonuclease activity and cleaves the viral genome concatemer once the capsid is full (headful packaging). Once the capsid is packaged with the DNA, the terminase complex is substituted by neck proteins.</text>
</comment>
<comment type="subunit">
    <text evidence="2 4 5 6">Homononamer; forms a ring-like structure through which genomic DNA is translocated into the capsid. Interacts with the terminase small subunit; the active complex is composed of dimer of terminase large subunits and a nonamer ring of terminase small subunits.</text>
</comment>
<comment type="interaction">
    <interactant intactId="EBI-15994787">
        <id>P04893</id>
    </interactant>
    <interactant intactId="EBI-15994787">
        <id>P04893</id>
        <label>3</label>
    </interactant>
    <organismsDiffer>false</organismsDiffer>
    <experiments>3</experiments>
</comment>
<comment type="domain">
    <text evidence="10">The N-terminus contains a helix-turn-helix (HTH) doamin that is involved in viral DNA binding.</text>
</comment>
<comment type="similarity">
    <text evidence="8">Belongs to the P22likvirus small terminase family.</text>
</comment>
<name>TERS_BPP22</name>
<organism>
    <name type="scientific">Salmonella phage P22</name>
    <name type="common">Bacteriophage P22</name>
    <dbReference type="NCBI Taxonomy" id="10754"/>
    <lineage>
        <taxon>Viruses</taxon>
        <taxon>Duplodnaviria</taxon>
        <taxon>Heunggongvirae</taxon>
        <taxon>Uroviricota</taxon>
        <taxon>Caudoviricetes</taxon>
        <taxon>Lederbergvirus</taxon>
    </lineage>
</organism>
<feature type="initiator methionine" description="Removed; by host" evidence="3">
    <location>
        <position position="1"/>
    </location>
</feature>
<feature type="chain" id="PRO_0000077744" description="Terminase, small subunit">
    <location>
        <begin position="2"/>
        <end position="162"/>
    </location>
</feature>
<feature type="DNA-binding region" evidence="4">
    <location>
        <begin position="143"/>
        <end position="152"/>
    </location>
</feature>
<feature type="region of interest" description="Helix-turn-helix (HTH)" evidence="10">
    <location>
        <begin position="7"/>
        <end position="27"/>
    </location>
</feature>
<feature type="region of interest" description="Disordered" evidence="1">
    <location>
        <begin position="132"/>
        <end position="162"/>
    </location>
</feature>
<feature type="region of interest" description="Interaction with the terminase large subunit gp2" evidence="6">
    <location>
        <begin position="140"/>
        <end position="162"/>
    </location>
</feature>
<feature type="compositionally biased region" description="Basic and acidic residues" evidence="1">
    <location>
        <begin position="137"/>
        <end position="162"/>
    </location>
</feature>
<feature type="mutagenesis site" description="Loss of self assembly as a homononamer, but homodecamer instead. Retardation of the rate of ring formation." evidence="2">
    <original>A</original>
    <variation>T</variation>
    <location>
        <position position="112"/>
    </location>
</feature>
<feature type="helix" evidence="12">
    <location>
        <begin position="9"/>
        <end position="11"/>
    </location>
</feature>
<feature type="helix" evidence="12">
    <location>
        <begin position="25"/>
        <end position="41"/>
    </location>
</feature>
<feature type="strand" evidence="12">
    <location>
        <begin position="44"/>
        <end position="54"/>
    </location>
</feature>
<feature type="strand" evidence="12">
    <location>
        <begin position="56"/>
        <end position="63"/>
    </location>
</feature>
<feature type="helix" evidence="12">
    <location>
        <begin position="69"/>
        <end position="76"/>
    </location>
</feature>
<feature type="helix" evidence="12">
    <location>
        <begin position="80"/>
        <end position="85"/>
    </location>
</feature>
<feature type="helix" evidence="12">
    <location>
        <begin position="86"/>
        <end position="88"/>
    </location>
</feature>
<feature type="helix" evidence="12">
    <location>
        <begin position="90"/>
        <end position="112"/>
    </location>
</feature>
<feature type="helix" evidence="12">
    <location>
        <begin position="118"/>
        <end position="125"/>
    </location>
</feature>
<feature type="strand" evidence="12">
    <location>
        <begin position="129"/>
        <end position="135"/>
    </location>
</feature>
<keyword id="KW-0002">3D-structure</keyword>
<keyword id="KW-0903">Direct protein sequencing</keyword>
<keyword id="KW-0238">DNA-binding</keyword>
<keyword id="KW-0426">Late protein</keyword>
<keyword id="KW-1185">Reference proteome</keyword>
<keyword id="KW-0231">Viral genome packaging</keyword>
<keyword id="KW-1188">Viral release from host cell</keyword>